<comment type="function">
    <text evidence="1">This is one of the proteins that bind and probably mediate the attachment of the 5S RNA into the large ribosomal subunit, where it forms part of the central protuberance. In the 70S ribosome it contacts protein S13 of the 30S subunit (bridge B1b), connecting the 2 subunits; this bridge is implicated in subunit movement. Contacts the P site tRNA; the 5S rRNA and some of its associated proteins might help stabilize positioning of ribosome-bound tRNAs.</text>
</comment>
<comment type="subunit">
    <text evidence="1">Part of the 50S ribosomal subunit; part of the 5S rRNA/L5/L18/L25 subcomplex. Contacts the 5S rRNA and the P site tRNA. Forms a bridge to the 30S subunit in the 70S ribosome.</text>
</comment>
<comment type="similarity">
    <text evidence="1">Belongs to the universal ribosomal protein uL5 family.</text>
</comment>
<keyword id="KW-0687">Ribonucleoprotein</keyword>
<keyword id="KW-0689">Ribosomal protein</keyword>
<keyword id="KW-0694">RNA-binding</keyword>
<keyword id="KW-0699">rRNA-binding</keyword>
<keyword id="KW-0820">tRNA-binding</keyword>
<dbReference type="EMBL" id="CP000444">
    <property type="protein sequence ID" value="ABI41212.1"/>
    <property type="molecule type" value="Genomic_DNA"/>
</dbReference>
<dbReference type="SMR" id="Q0I093"/>
<dbReference type="KEGG" id="shm:Shewmr7_0206"/>
<dbReference type="HOGENOM" id="CLU_061015_2_1_6"/>
<dbReference type="GO" id="GO:1990904">
    <property type="term" value="C:ribonucleoprotein complex"/>
    <property type="evidence" value="ECO:0007669"/>
    <property type="project" value="UniProtKB-KW"/>
</dbReference>
<dbReference type="GO" id="GO:0005840">
    <property type="term" value="C:ribosome"/>
    <property type="evidence" value="ECO:0007669"/>
    <property type="project" value="UniProtKB-KW"/>
</dbReference>
<dbReference type="GO" id="GO:0019843">
    <property type="term" value="F:rRNA binding"/>
    <property type="evidence" value="ECO:0007669"/>
    <property type="project" value="UniProtKB-UniRule"/>
</dbReference>
<dbReference type="GO" id="GO:0003735">
    <property type="term" value="F:structural constituent of ribosome"/>
    <property type="evidence" value="ECO:0007669"/>
    <property type="project" value="InterPro"/>
</dbReference>
<dbReference type="GO" id="GO:0000049">
    <property type="term" value="F:tRNA binding"/>
    <property type="evidence" value="ECO:0007669"/>
    <property type="project" value="UniProtKB-UniRule"/>
</dbReference>
<dbReference type="GO" id="GO:0006412">
    <property type="term" value="P:translation"/>
    <property type="evidence" value="ECO:0007669"/>
    <property type="project" value="UniProtKB-UniRule"/>
</dbReference>
<dbReference type="FunFam" id="3.30.1440.10:FF:000001">
    <property type="entry name" value="50S ribosomal protein L5"/>
    <property type="match status" value="1"/>
</dbReference>
<dbReference type="Gene3D" id="3.30.1440.10">
    <property type="match status" value="1"/>
</dbReference>
<dbReference type="HAMAP" id="MF_01333_B">
    <property type="entry name" value="Ribosomal_uL5_B"/>
    <property type="match status" value="1"/>
</dbReference>
<dbReference type="InterPro" id="IPR002132">
    <property type="entry name" value="Ribosomal_uL5"/>
</dbReference>
<dbReference type="InterPro" id="IPR020930">
    <property type="entry name" value="Ribosomal_uL5_bac-type"/>
</dbReference>
<dbReference type="InterPro" id="IPR031309">
    <property type="entry name" value="Ribosomal_uL5_C"/>
</dbReference>
<dbReference type="InterPro" id="IPR020929">
    <property type="entry name" value="Ribosomal_uL5_CS"/>
</dbReference>
<dbReference type="InterPro" id="IPR022803">
    <property type="entry name" value="Ribosomal_uL5_dom_sf"/>
</dbReference>
<dbReference type="InterPro" id="IPR031310">
    <property type="entry name" value="Ribosomal_uL5_N"/>
</dbReference>
<dbReference type="NCBIfam" id="NF000585">
    <property type="entry name" value="PRK00010.1"/>
    <property type="match status" value="1"/>
</dbReference>
<dbReference type="PANTHER" id="PTHR11994">
    <property type="entry name" value="60S RIBOSOMAL PROTEIN L11-RELATED"/>
    <property type="match status" value="1"/>
</dbReference>
<dbReference type="Pfam" id="PF00281">
    <property type="entry name" value="Ribosomal_L5"/>
    <property type="match status" value="1"/>
</dbReference>
<dbReference type="Pfam" id="PF00673">
    <property type="entry name" value="Ribosomal_L5_C"/>
    <property type="match status" value="1"/>
</dbReference>
<dbReference type="PIRSF" id="PIRSF002161">
    <property type="entry name" value="Ribosomal_L5"/>
    <property type="match status" value="1"/>
</dbReference>
<dbReference type="SUPFAM" id="SSF55282">
    <property type="entry name" value="RL5-like"/>
    <property type="match status" value="1"/>
</dbReference>
<dbReference type="PROSITE" id="PS00358">
    <property type="entry name" value="RIBOSOMAL_L5"/>
    <property type="match status" value="1"/>
</dbReference>
<reference key="1">
    <citation type="submission" date="2006-08" db="EMBL/GenBank/DDBJ databases">
        <title>Complete sequence of chromosome 1 of Shewanella sp. MR-7.</title>
        <authorList>
            <person name="Copeland A."/>
            <person name="Lucas S."/>
            <person name="Lapidus A."/>
            <person name="Barry K."/>
            <person name="Detter J.C."/>
            <person name="Glavina del Rio T."/>
            <person name="Hammon N."/>
            <person name="Israni S."/>
            <person name="Dalin E."/>
            <person name="Tice H."/>
            <person name="Pitluck S."/>
            <person name="Kiss H."/>
            <person name="Brettin T."/>
            <person name="Bruce D."/>
            <person name="Han C."/>
            <person name="Tapia R."/>
            <person name="Gilna P."/>
            <person name="Schmutz J."/>
            <person name="Larimer F."/>
            <person name="Land M."/>
            <person name="Hauser L."/>
            <person name="Kyrpides N."/>
            <person name="Mikhailova N."/>
            <person name="Nealson K."/>
            <person name="Konstantinidis K."/>
            <person name="Klappenbach J."/>
            <person name="Tiedje J."/>
            <person name="Richardson P."/>
        </authorList>
    </citation>
    <scope>NUCLEOTIDE SEQUENCE [LARGE SCALE GENOMIC DNA]</scope>
    <source>
        <strain>MR-7</strain>
    </source>
</reference>
<accession>Q0I093</accession>
<name>RL5_SHESR</name>
<proteinExistence type="inferred from homology"/>
<organism>
    <name type="scientific">Shewanella sp. (strain MR-7)</name>
    <dbReference type="NCBI Taxonomy" id="60481"/>
    <lineage>
        <taxon>Bacteria</taxon>
        <taxon>Pseudomonadati</taxon>
        <taxon>Pseudomonadota</taxon>
        <taxon>Gammaproteobacteria</taxon>
        <taxon>Alteromonadales</taxon>
        <taxon>Shewanellaceae</taxon>
        <taxon>Shewanella</taxon>
    </lineage>
</organism>
<feature type="chain" id="PRO_1000052828" description="Large ribosomal subunit protein uL5">
    <location>
        <begin position="1"/>
        <end position="179"/>
    </location>
</feature>
<evidence type="ECO:0000255" key="1">
    <source>
        <dbReference type="HAMAP-Rule" id="MF_01333"/>
    </source>
</evidence>
<evidence type="ECO:0000305" key="2"/>
<protein>
    <recommendedName>
        <fullName evidence="1">Large ribosomal subunit protein uL5</fullName>
    </recommendedName>
    <alternativeName>
        <fullName evidence="2">50S ribosomal protein L5</fullName>
    </alternativeName>
</protein>
<gene>
    <name evidence="1" type="primary">rplE</name>
    <name type="ordered locus">Shewmr7_0206</name>
</gene>
<sequence>MAKLHDKYQETVVAELTKKFGYTSVMQVPRIEKITLNMGVGEAVADKKVMEHAVRDMTAIAGQKPVVTVARKSVAGFKIREGYPIGCKVTLRGERMWEFLERLVDIAIPRIRDFRGLSAKAFDGRGNYAMGVREQIIFPEIDYDKIDKIRGMDIVITTSANTDEEGRALLDAFNFPFKK</sequence>